<protein>
    <recommendedName>
        <fullName evidence="1">Uracil-DNA glycosylase</fullName>
        <shortName evidence="1">UDG</shortName>
        <ecNumber evidence="1">3.2.2.27</ecNumber>
    </recommendedName>
</protein>
<dbReference type="EC" id="3.2.2.27" evidence="1"/>
<dbReference type="EMBL" id="CP000384">
    <property type="protein sequence ID" value="ABG08042.1"/>
    <property type="molecule type" value="Genomic_DNA"/>
</dbReference>
<dbReference type="SMR" id="Q1BAP2"/>
<dbReference type="KEGG" id="mmc:Mmcs_1933"/>
<dbReference type="HOGENOM" id="CLU_032162_3_1_11"/>
<dbReference type="BioCyc" id="MSP164756:G1G6O-1977-MONOMER"/>
<dbReference type="GO" id="GO:0005737">
    <property type="term" value="C:cytoplasm"/>
    <property type="evidence" value="ECO:0007669"/>
    <property type="project" value="UniProtKB-SubCell"/>
</dbReference>
<dbReference type="GO" id="GO:0004844">
    <property type="term" value="F:uracil DNA N-glycosylase activity"/>
    <property type="evidence" value="ECO:0007669"/>
    <property type="project" value="UniProtKB-UniRule"/>
</dbReference>
<dbReference type="GO" id="GO:0097510">
    <property type="term" value="P:base-excision repair, AP site formation via deaminated base removal"/>
    <property type="evidence" value="ECO:0007669"/>
    <property type="project" value="TreeGrafter"/>
</dbReference>
<dbReference type="CDD" id="cd10027">
    <property type="entry name" value="UDG-F1-like"/>
    <property type="match status" value="1"/>
</dbReference>
<dbReference type="FunFam" id="3.40.470.10:FF:000006">
    <property type="entry name" value="Uracil-DNA glycosylase"/>
    <property type="match status" value="1"/>
</dbReference>
<dbReference type="Gene3D" id="3.40.470.10">
    <property type="entry name" value="Uracil-DNA glycosylase-like domain"/>
    <property type="match status" value="1"/>
</dbReference>
<dbReference type="HAMAP" id="MF_00148">
    <property type="entry name" value="UDG"/>
    <property type="match status" value="1"/>
</dbReference>
<dbReference type="InterPro" id="IPR002043">
    <property type="entry name" value="UDG_fam1"/>
</dbReference>
<dbReference type="InterPro" id="IPR018085">
    <property type="entry name" value="Ura-DNA_Glyclase_AS"/>
</dbReference>
<dbReference type="InterPro" id="IPR005122">
    <property type="entry name" value="Uracil-DNA_glycosylase-like"/>
</dbReference>
<dbReference type="InterPro" id="IPR036895">
    <property type="entry name" value="Uracil-DNA_glycosylase-like_sf"/>
</dbReference>
<dbReference type="NCBIfam" id="NF003588">
    <property type="entry name" value="PRK05254.1-1"/>
    <property type="match status" value="1"/>
</dbReference>
<dbReference type="NCBIfam" id="NF003592">
    <property type="entry name" value="PRK05254.1-5"/>
    <property type="match status" value="1"/>
</dbReference>
<dbReference type="NCBIfam" id="TIGR00628">
    <property type="entry name" value="ung"/>
    <property type="match status" value="1"/>
</dbReference>
<dbReference type="PANTHER" id="PTHR11264">
    <property type="entry name" value="URACIL-DNA GLYCOSYLASE"/>
    <property type="match status" value="1"/>
</dbReference>
<dbReference type="PANTHER" id="PTHR11264:SF0">
    <property type="entry name" value="URACIL-DNA GLYCOSYLASE"/>
    <property type="match status" value="1"/>
</dbReference>
<dbReference type="Pfam" id="PF03167">
    <property type="entry name" value="UDG"/>
    <property type="match status" value="1"/>
</dbReference>
<dbReference type="SMART" id="SM00986">
    <property type="entry name" value="UDG"/>
    <property type="match status" value="1"/>
</dbReference>
<dbReference type="SMART" id="SM00987">
    <property type="entry name" value="UreE_C"/>
    <property type="match status" value="1"/>
</dbReference>
<dbReference type="SUPFAM" id="SSF52141">
    <property type="entry name" value="Uracil-DNA glycosylase-like"/>
    <property type="match status" value="1"/>
</dbReference>
<dbReference type="PROSITE" id="PS00130">
    <property type="entry name" value="U_DNA_GLYCOSYLASE"/>
    <property type="match status" value="1"/>
</dbReference>
<gene>
    <name evidence="1" type="primary">ung</name>
    <name type="ordered locus">Mmcs_1933</name>
</gene>
<accession>Q1BAP2</accession>
<organism>
    <name type="scientific">Mycobacterium sp. (strain MCS)</name>
    <dbReference type="NCBI Taxonomy" id="164756"/>
    <lineage>
        <taxon>Bacteria</taxon>
        <taxon>Bacillati</taxon>
        <taxon>Actinomycetota</taxon>
        <taxon>Actinomycetes</taxon>
        <taxon>Mycobacteriales</taxon>
        <taxon>Mycobacteriaceae</taxon>
        <taxon>Mycobacterium</taxon>
    </lineage>
</organism>
<reference key="1">
    <citation type="submission" date="2006-06" db="EMBL/GenBank/DDBJ databases">
        <title>Complete sequence of chromosome of Mycobacterium sp. MCS.</title>
        <authorList>
            <consortium name="US DOE Joint Genome Institute"/>
            <person name="Copeland A."/>
            <person name="Lucas S."/>
            <person name="Lapidus A."/>
            <person name="Barry K."/>
            <person name="Detter J.C."/>
            <person name="Glavina del Rio T."/>
            <person name="Hammon N."/>
            <person name="Israni S."/>
            <person name="Dalin E."/>
            <person name="Tice H."/>
            <person name="Pitluck S."/>
            <person name="Martinez M."/>
            <person name="Schmutz J."/>
            <person name="Larimer F."/>
            <person name="Land M."/>
            <person name="Hauser L."/>
            <person name="Kyrpides N."/>
            <person name="Kim E."/>
            <person name="Miller C.D."/>
            <person name="Hughes J.E."/>
            <person name="Anderson A.J."/>
            <person name="Sims R.C."/>
            <person name="Richardson P."/>
        </authorList>
    </citation>
    <scope>NUCLEOTIDE SEQUENCE [LARGE SCALE GENOMIC DNA]</scope>
    <source>
        <strain>MCS</strain>
    </source>
</reference>
<feature type="chain" id="PRO_1000009916" description="Uracil-DNA glycosylase">
    <location>
        <begin position="1"/>
        <end position="227"/>
    </location>
</feature>
<feature type="active site" description="Proton acceptor" evidence="1">
    <location>
        <position position="68"/>
    </location>
</feature>
<proteinExistence type="inferred from homology"/>
<sequence length="227" mass="24621">MTARALSELVDQGWAQALEPVREQVAQMGEFLRAELAAGHRYLPAGANVLRAFSFPFDQVRVLIVGQDPYPTPGHAVGLSFSVDPEVRPLPRSLANIFTEYTADLGYPQPSNGDLSPWAQRGVLLLNRVLTVRPGTPASHRGKGWEAVTECAIRALVARDTPMVAVLWGRDAATLKPMLTGSACVAIESPHPSPLSASRGFFGSRPFSRANELLTQMGAEPIDWRLP</sequence>
<keyword id="KW-0963">Cytoplasm</keyword>
<keyword id="KW-0227">DNA damage</keyword>
<keyword id="KW-0234">DNA repair</keyword>
<keyword id="KW-0378">Hydrolase</keyword>
<evidence type="ECO:0000255" key="1">
    <source>
        <dbReference type="HAMAP-Rule" id="MF_00148"/>
    </source>
</evidence>
<comment type="function">
    <text evidence="1">Excises uracil residues from the DNA which can arise as a result of misincorporation of dUMP residues by DNA polymerase or due to deamination of cytosine.</text>
</comment>
<comment type="catalytic activity">
    <reaction evidence="1">
        <text>Hydrolyzes single-stranded DNA or mismatched double-stranded DNA and polynucleotides, releasing free uracil.</text>
        <dbReference type="EC" id="3.2.2.27"/>
    </reaction>
</comment>
<comment type="subcellular location">
    <subcellularLocation>
        <location evidence="1">Cytoplasm</location>
    </subcellularLocation>
</comment>
<comment type="similarity">
    <text evidence="1">Belongs to the uracil-DNA glycosylase (UDG) superfamily. UNG family.</text>
</comment>
<name>UNG_MYCSS</name>